<comment type="function">
    <text evidence="1">Core subunit of the mitochondrial membrane respiratory chain NADH dehydrogenase (Complex I) which catalyzes electron transfer from NADH through the respiratory chain, using ubiquinone as an electron acceptor. Essential for the catalytic activity and assembly of complex I.</text>
</comment>
<comment type="catalytic activity">
    <reaction evidence="1">
        <text>a ubiquinone + NADH + 5 H(+)(in) = a ubiquinol + NAD(+) + 4 H(+)(out)</text>
        <dbReference type="Rhea" id="RHEA:29091"/>
        <dbReference type="Rhea" id="RHEA-COMP:9565"/>
        <dbReference type="Rhea" id="RHEA-COMP:9566"/>
        <dbReference type="ChEBI" id="CHEBI:15378"/>
        <dbReference type="ChEBI" id="CHEBI:16389"/>
        <dbReference type="ChEBI" id="CHEBI:17976"/>
        <dbReference type="ChEBI" id="CHEBI:57540"/>
        <dbReference type="ChEBI" id="CHEBI:57945"/>
        <dbReference type="EC" id="7.1.1.2"/>
    </reaction>
</comment>
<comment type="subunit">
    <text evidence="1 2">Core subunit of respiratory chain NADH dehydrogenase (Complex I) which is composed of 45 different subunits. Interacts with TMEM242 (By similarity).</text>
</comment>
<comment type="subcellular location">
    <subcellularLocation>
        <location evidence="2">Mitochondrion inner membrane</location>
        <topology evidence="3">Multi-pass membrane protein</topology>
    </subcellularLocation>
</comment>
<comment type="similarity">
    <text evidence="4">Belongs to the complex I subunit 2 family.</text>
</comment>
<sequence>MTPMTTLIMLFSLLLGTTLTLTSSHWLLMWMGLEVSTLAIIPLLTYTNHPRSIESAIKYFLTQATASMLLMFAASLNTWMTGHWTLMQIDNTISSGIMTFALAMKLGLAPFHYWVPEVLQGSSLMSGMILLTWQKLAPISIIYQISPTLNMDILLTLAISSTLLGGWNGLNQTQLRKVMAYSSIAHMGWMVLIIIYFPTLTTLNLTLYIMSTVALFTVFHTTNITKTKPLSLMWNKAPIMTLAIILLLLSLGGLPPLTGFAPKWLVIQELIKHDNMIMATVLAITALLNLFFYMRIIYSSTLTTFPTTNNNKFHWYSKSTKNPLSLPTLVILSTTLLPLTPMFITLS</sequence>
<gene>
    <name evidence="1" type="primary">MT-ND2</name>
    <name type="synonym">MTND2</name>
    <name type="synonym">NADH2</name>
    <name type="synonym">ND2</name>
</gene>
<proteinExistence type="inferred from homology"/>
<organism>
    <name type="scientific">Ornithorhynchus anatinus</name>
    <name type="common">Duckbill platypus</name>
    <dbReference type="NCBI Taxonomy" id="9258"/>
    <lineage>
        <taxon>Eukaryota</taxon>
        <taxon>Metazoa</taxon>
        <taxon>Chordata</taxon>
        <taxon>Craniata</taxon>
        <taxon>Vertebrata</taxon>
        <taxon>Euteleostomi</taxon>
        <taxon>Mammalia</taxon>
        <taxon>Monotremata</taxon>
        <taxon>Ornithorhynchidae</taxon>
        <taxon>Ornithorhynchus</taxon>
    </lineage>
</organism>
<name>NU2M_ORNAN</name>
<protein>
    <recommendedName>
        <fullName evidence="1">NADH-ubiquinone oxidoreductase chain 2</fullName>
        <ecNumber evidence="1">7.1.1.2</ecNumber>
    </recommendedName>
    <alternativeName>
        <fullName>NADH dehydrogenase subunit 2</fullName>
    </alternativeName>
</protein>
<keyword id="KW-0249">Electron transport</keyword>
<keyword id="KW-0472">Membrane</keyword>
<keyword id="KW-0496">Mitochondrion</keyword>
<keyword id="KW-0999">Mitochondrion inner membrane</keyword>
<keyword id="KW-0520">NAD</keyword>
<keyword id="KW-1185">Reference proteome</keyword>
<keyword id="KW-0679">Respiratory chain</keyword>
<keyword id="KW-1278">Translocase</keyword>
<keyword id="KW-0812">Transmembrane</keyword>
<keyword id="KW-1133">Transmembrane helix</keyword>
<keyword id="KW-0813">Transport</keyword>
<keyword id="KW-0830">Ubiquinone</keyword>
<accession>Q36451</accession>
<evidence type="ECO:0000250" key="1">
    <source>
        <dbReference type="UniProtKB" id="P03891"/>
    </source>
</evidence>
<evidence type="ECO:0000250" key="2">
    <source>
        <dbReference type="UniProtKB" id="P03892"/>
    </source>
</evidence>
<evidence type="ECO:0000255" key="3"/>
<evidence type="ECO:0000305" key="4"/>
<evidence type="ECO:0000312" key="5">
    <source>
        <dbReference type="Proteomes" id="UP000002279"/>
    </source>
</evidence>
<geneLocation type="mitochondrion"/>
<reference key="1">
    <citation type="journal article" date="1996" name="J. Mol. Evol.">
        <title>The mitochondrial genome of a monotreme--the platypus (Ornithorhynchus anatinus).</title>
        <authorList>
            <person name="Janke A."/>
            <person name="Gemmell N.J."/>
            <person name="Feldmaier-Fuchs G."/>
            <person name="von Haeseler A."/>
            <person name="Paabo S."/>
        </authorList>
    </citation>
    <scope>NUCLEOTIDE SEQUENCE [LARGE SCALE GENOMIC DNA]</scope>
    <source>
        <strain evidence="5">Glennie</strain>
    </source>
</reference>
<feature type="chain" id="PRO_0000117615" description="NADH-ubiquinone oxidoreductase chain 2">
    <location>
        <begin position="1"/>
        <end position="347"/>
    </location>
</feature>
<feature type="transmembrane region" description="Helical" evidence="3">
    <location>
        <begin position="1"/>
        <end position="21"/>
    </location>
</feature>
<feature type="transmembrane region" description="Helical" evidence="3">
    <location>
        <begin position="26"/>
        <end position="46"/>
    </location>
</feature>
<feature type="transmembrane region" description="Helical" evidence="3">
    <location>
        <begin position="56"/>
        <end position="76"/>
    </location>
</feature>
<feature type="transmembrane region" description="Helical" evidence="3">
    <location>
        <begin position="96"/>
        <end position="116"/>
    </location>
</feature>
<feature type="transmembrane region" description="Helical" evidence="3">
    <location>
        <begin position="153"/>
        <end position="171"/>
    </location>
</feature>
<feature type="transmembrane region" description="Helical" evidence="3">
    <location>
        <begin position="178"/>
        <end position="198"/>
    </location>
</feature>
<feature type="transmembrane region" description="Helical" evidence="3">
    <location>
        <begin position="199"/>
        <end position="219"/>
    </location>
</feature>
<feature type="transmembrane region" description="Helical" evidence="3">
    <location>
        <begin position="237"/>
        <end position="257"/>
    </location>
</feature>
<feature type="transmembrane region" description="Helical" evidence="3">
    <location>
        <begin position="277"/>
        <end position="297"/>
    </location>
</feature>
<feature type="transmembrane region" description="Helical" evidence="3">
    <location>
        <begin position="326"/>
        <end position="346"/>
    </location>
</feature>
<dbReference type="EC" id="7.1.1.2" evidence="1"/>
<dbReference type="EMBL" id="X83427">
    <property type="protein sequence ID" value="CAA58456.1"/>
    <property type="molecule type" value="Genomic_DNA"/>
</dbReference>
<dbReference type="PIR" id="B58888">
    <property type="entry name" value="B58888"/>
</dbReference>
<dbReference type="RefSeq" id="NP_008044.1">
    <property type="nucleotide sequence ID" value="NC_000891.1"/>
</dbReference>
<dbReference type="SMR" id="Q36451"/>
<dbReference type="FunCoup" id="Q36451">
    <property type="interactions" value="211"/>
</dbReference>
<dbReference type="STRING" id="9258.ENSOANP00000024996"/>
<dbReference type="Ensembl" id="ENSOANT00000028508.2">
    <property type="protein sequence ID" value="ENSOANP00000024996.2"/>
    <property type="gene ID" value="ENSOANG00000019384.2"/>
</dbReference>
<dbReference type="GeneID" id="808700"/>
<dbReference type="KEGG" id="oaa:808700"/>
<dbReference type="CTD" id="4536"/>
<dbReference type="eggNOG" id="KOG4668">
    <property type="taxonomic scope" value="Eukaryota"/>
</dbReference>
<dbReference type="GeneTree" id="ENSGT00730000111348"/>
<dbReference type="InParanoid" id="Q36451"/>
<dbReference type="OMA" id="HFWVPEV"/>
<dbReference type="OrthoDB" id="4092844at2759"/>
<dbReference type="Proteomes" id="UP000002279">
    <property type="component" value="Mitochondrion"/>
</dbReference>
<dbReference type="Bgee" id="ENSOANG00000019384">
    <property type="expression patterns" value="Expressed in cerebellum and 7 other cell types or tissues"/>
</dbReference>
<dbReference type="GO" id="GO:0005743">
    <property type="term" value="C:mitochondrial inner membrane"/>
    <property type="evidence" value="ECO:0000250"/>
    <property type="project" value="UniProtKB"/>
</dbReference>
<dbReference type="GO" id="GO:0045271">
    <property type="term" value="C:respiratory chain complex I"/>
    <property type="evidence" value="ECO:0000318"/>
    <property type="project" value="GO_Central"/>
</dbReference>
<dbReference type="GO" id="GO:0008137">
    <property type="term" value="F:NADH dehydrogenase (ubiquinone) activity"/>
    <property type="evidence" value="ECO:0000250"/>
    <property type="project" value="UniProtKB"/>
</dbReference>
<dbReference type="GO" id="GO:0006120">
    <property type="term" value="P:mitochondrial electron transport, NADH to ubiquinone"/>
    <property type="evidence" value="ECO:0000250"/>
    <property type="project" value="UniProtKB"/>
</dbReference>
<dbReference type="GO" id="GO:0032981">
    <property type="term" value="P:mitochondrial respiratory chain complex I assembly"/>
    <property type="evidence" value="ECO:0000250"/>
    <property type="project" value="UniProtKB"/>
</dbReference>
<dbReference type="GO" id="GO:0072593">
    <property type="term" value="P:reactive oxygen species metabolic process"/>
    <property type="evidence" value="ECO:0007669"/>
    <property type="project" value="Ensembl"/>
</dbReference>
<dbReference type="InterPro" id="IPR050175">
    <property type="entry name" value="Complex_I_Subunit_2"/>
</dbReference>
<dbReference type="InterPro" id="IPR010933">
    <property type="entry name" value="NADH_DH_su2_C"/>
</dbReference>
<dbReference type="InterPro" id="IPR003917">
    <property type="entry name" value="NADH_UbQ_OxRdtase_chain2"/>
</dbReference>
<dbReference type="InterPro" id="IPR001750">
    <property type="entry name" value="ND/Mrp_TM"/>
</dbReference>
<dbReference type="PANTHER" id="PTHR46552">
    <property type="entry name" value="NADH-UBIQUINONE OXIDOREDUCTASE CHAIN 2"/>
    <property type="match status" value="1"/>
</dbReference>
<dbReference type="PANTHER" id="PTHR46552:SF1">
    <property type="entry name" value="NADH-UBIQUINONE OXIDOREDUCTASE CHAIN 2"/>
    <property type="match status" value="1"/>
</dbReference>
<dbReference type="Pfam" id="PF06444">
    <property type="entry name" value="NADH_dehy_S2_C"/>
    <property type="match status" value="1"/>
</dbReference>
<dbReference type="Pfam" id="PF00361">
    <property type="entry name" value="Proton_antipo_M"/>
    <property type="match status" value="1"/>
</dbReference>
<dbReference type="PRINTS" id="PR01436">
    <property type="entry name" value="NADHDHGNASE2"/>
</dbReference>